<sequence length="446" mass="49328">SAAALALLLCAGQVIALPVNSPMNKGDTEVMKCIVEVISDTLSKPSPMPVSQECFETLRGDERILSILRHQNLLKELQDLALQGAKERSHQQKKQSSYEDELSEVLEKQNDQAELKEGTEEASSKEAAEKRGDSKEVEKNDEDADGAKPQASLEPPXXXEAEDQTPGEEEAASTHPLASLPSKKRPGAQAEEDHEGPSQGPVDREKGPSAEQGPQAEREEEEEAEAGEKAVPEEEGPRSEAFDSHPSLGYKEMQRGWPQAPAMDGAGKTGAEEAQPPEGKGAREHSRQEEEEETAGAPQGLFRGGKRGEPAQEEEERLSEEWENAKRWSKMDRLAKELTAEKRLQGEEEEEEEEEDPDRSMKLSFRAPAYGFRGPGLQLRRGWRPSSREDSVEAGLPLQVRXYLEEKKEEEGSANRRPEDQELESLSAIEAELEKVAPQLQSLRRG</sequence>
<comment type="function">
    <molecule>Pancreastatin</molecule>
    <text>Strongly inhibits glucose induced insulin release from the pancreas.</text>
</comment>
<comment type="function">
    <molecule>Parastatin</molecule>
    <text>Inhibits low calcium-stimulated parathyroid cell secretion.</text>
</comment>
<comment type="function">
    <molecule>Catestatin</molecule>
    <text evidence="4">Inhibits catecholamine release from chromaffin cells and noradrenergic neurons by acting as a non-competitive nicotinic cholinergic antagonist. Can induce mast cell migration, degranulation and production of cytokines and chemokines.</text>
</comment>
<comment type="function">
    <molecule>Serpinin</molecule>
    <text evidence="5">Regulates granule biogenesis in endocrine cells by up-regulating the transcription of protease nexin 1 (SERPINE2) via a cAMP-PKA-SP1 pathway. This leads to inhibition of granule protein degradation in the Golgi complex which in turn promotes granule formation.</text>
</comment>
<comment type="subunit">
    <text evidence="2 4 5">Self-interacts; self-assembly is promoted in vitro by chondroitin sulfate attachment which occurs at mildly acidic pH conditions (By similarity). Interacts with SCG3 (By similarity). Interacts with ITPR1 in the secretory granules (By similarity).</text>
</comment>
<comment type="subcellular location">
    <molecule>Serpinin</molecule>
    <subcellularLocation>
        <location evidence="5">Secreted</location>
    </subcellularLocation>
    <subcellularLocation>
        <location evidence="5">Cytoplasmic vesicle</location>
        <location evidence="5">Secretory vesicle</location>
    </subcellularLocation>
    <text evidence="5">Pyroglutaminated serpinin localizes to secretory vesicle.</text>
</comment>
<comment type="subcellular location">
    <subcellularLocation>
        <location evidence="3">Cytoplasmic vesicle</location>
        <location evidence="3">Secretory vesicle</location>
    </subcellularLocation>
    <subcellularLocation>
        <location evidence="3">Cytoplasmic vesicle</location>
        <location evidence="3">Secretory vesicle</location>
        <location evidence="3">Neuronal dense core vesicle</location>
    </subcellularLocation>
    <subcellularLocation>
        <location evidence="3">Secreted</location>
    </subcellularLocation>
    <text evidence="3">Associated with the secretory granule membrane through direct interaction to SCG3 that in turn binds to cholesterol-enriched lipid rafts in intragranular conditions. In pituitary gonadotropes, located in large secretory granules.</text>
</comment>
<comment type="PTM">
    <text evidence="4">O-glycosylated; contains chondroitin sulfate (CS). CS attachment is pH-dependent, being observed at mildly acidic conditions of pH 5 but not at neutral pH, and promotes self-assembly in vitro.</text>
</comment>
<comment type="PTM">
    <text evidence="7">Parathyroid CHGA is sulfated on tyrosine residues, whereas adrenal CHGA seems to be mainly sulfated on oligosaccharide residues.</text>
</comment>
<comment type="miscellaneous">
    <text>Binds calcium with a low-affinity.</text>
</comment>
<comment type="similarity">
    <text evidence="9">Belongs to the chromogranin/secretogranin protein family.</text>
</comment>
<organism>
    <name type="scientific">Sus scrofa</name>
    <name type="common">Pig</name>
    <dbReference type="NCBI Taxonomy" id="9823"/>
    <lineage>
        <taxon>Eukaryota</taxon>
        <taxon>Metazoa</taxon>
        <taxon>Chordata</taxon>
        <taxon>Craniata</taxon>
        <taxon>Vertebrata</taxon>
        <taxon>Euteleostomi</taxon>
        <taxon>Mammalia</taxon>
        <taxon>Eutheria</taxon>
        <taxon>Laurasiatheria</taxon>
        <taxon>Artiodactyla</taxon>
        <taxon>Suina</taxon>
        <taxon>Suidae</taxon>
        <taxon>Sus</taxon>
    </lineage>
</organism>
<accession>P04404</accession>
<feature type="signal peptide">
    <location>
        <begin position="1" status="less than"/>
        <end position="16"/>
    </location>
</feature>
<feature type="chain" id="PRO_0000005426" description="Chromogranin-A">
    <location>
        <begin position="17"/>
        <end position="446"/>
    </location>
</feature>
<feature type="peptide" id="PRO_0000005427" description="Pancreastatin">
    <location>
        <begin position="256"/>
        <end position="304"/>
    </location>
</feature>
<feature type="peptide" id="PRO_0000005428" description="WE-14">
    <location>
        <begin position="328"/>
        <end position="341"/>
    </location>
</feature>
<feature type="peptide" id="PRO_0000432692" description="Catestatin" evidence="4">
    <location>
        <begin position="359"/>
        <end position="379"/>
    </location>
</feature>
<feature type="peptide" id="PRO_0000005429" description="Parastatin">
    <location>
        <begin position="363"/>
        <end position="435"/>
    </location>
</feature>
<feature type="peptide" id="PRO_0000432693" description="GE-25" evidence="2">
    <location>
        <begin position="382"/>
        <end position="406"/>
    </location>
</feature>
<feature type="peptide" id="PRO_0000432694" description="Serpinin-RRG" evidence="3">
    <location>
        <begin position="418"/>
        <end position="446"/>
    </location>
</feature>
<feature type="peptide" id="PRO_0000432695" description="Serpinin" evidence="5">
    <location>
        <begin position="418"/>
        <end position="443"/>
    </location>
</feature>
<feature type="peptide" id="PRO_0000432696" description="p-Glu serpinin precursor" evidence="5">
    <location>
        <begin position="421"/>
        <end position="443"/>
    </location>
</feature>
<feature type="region of interest" description="Disordered" evidence="6">
    <location>
        <begin position="85"/>
        <end position="426"/>
    </location>
</feature>
<feature type="compositionally biased region" description="Basic and acidic residues" evidence="6">
    <location>
        <begin position="105"/>
        <end position="138"/>
    </location>
</feature>
<feature type="compositionally biased region" description="Acidic residues" evidence="6">
    <location>
        <begin position="160"/>
        <end position="171"/>
    </location>
</feature>
<feature type="compositionally biased region" description="Basic and acidic residues" evidence="6">
    <location>
        <begin position="226"/>
        <end position="243"/>
    </location>
</feature>
<feature type="compositionally biased region" description="Basic and acidic residues" evidence="6">
    <location>
        <begin position="319"/>
        <end position="346"/>
    </location>
</feature>
<feature type="compositionally biased region" description="Acidic residues" evidence="6">
    <location>
        <begin position="347"/>
        <end position="357"/>
    </location>
</feature>
<feature type="compositionally biased region" description="Basic and acidic residues" evidence="6">
    <location>
        <begin position="403"/>
        <end position="420"/>
    </location>
</feature>
<feature type="modified residue" description="Phosphoserine" evidence="2">
    <location>
        <position position="97"/>
    </location>
</feature>
<feature type="modified residue" description="Phosphoserine" evidence="4">
    <location>
        <position position="209"/>
    </location>
</feature>
<feature type="modified residue" description="Phosphoserine" evidence="4">
    <location>
        <position position="286"/>
    </location>
</feature>
<feature type="modified residue" description="Glycine amide" evidence="8">
    <location>
        <position position="304"/>
    </location>
</feature>
<feature type="modified residue" description="Phosphoserine" evidence="4">
    <location>
        <position position="319"/>
    </location>
</feature>
<feature type="modified residue" description="Phosphoserine" evidence="3">
    <location>
        <position position="360"/>
    </location>
</feature>
<feature type="modified residue" description="Methionine sulfoxide" evidence="4">
    <location>
        <position position="361"/>
    </location>
</feature>
<feature type="modified residue" description="Phosphoserine" evidence="2">
    <location>
        <position position="387"/>
    </location>
</feature>
<feature type="modified residue" description="Phosphoserine" evidence="2">
    <location>
        <position position="391"/>
    </location>
</feature>
<feature type="modified residue" description="Phosphoserine" evidence="3">
    <location>
        <position position="413"/>
    </location>
</feature>
<feature type="modified residue" description="Phosphoserine" evidence="3">
    <location>
        <position position="427"/>
    </location>
</feature>
<feature type="glycosylation site" description="O-linked (Xyl...) (chondroitin sulfate) serine" evidence="4">
    <location>
        <position position="413"/>
    </location>
</feature>
<feature type="disulfide bond" evidence="1">
    <location>
        <begin position="33"/>
        <end position="54"/>
    </location>
</feature>
<feature type="non-terminal residue">
    <location>
        <position position="1"/>
    </location>
</feature>
<name>CMGA_PIG</name>
<dbReference type="EMBL" id="M20926">
    <property type="protein sequence ID" value="AAA31016.1"/>
    <property type="molecule type" value="mRNA"/>
</dbReference>
<dbReference type="PIR" id="A32284">
    <property type="entry name" value="A32284"/>
</dbReference>
<dbReference type="RefSeq" id="NP_001157477.2">
    <property type="nucleotide sequence ID" value="NM_001164005.2"/>
</dbReference>
<dbReference type="FunCoup" id="P04404">
    <property type="interactions" value="274"/>
</dbReference>
<dbReference type="STRING" id="9823.ENSSSCP00000072459"/>
<dbReference type="GlyConnect" id="94">
    <property type="glycosylation" value="1 O-Linked glycan"/>
</dbReference>
<dbReference type="GlyGen" id="P04404">
    <property type="glycosylation" value="1 site"/>
</dbReference>
<dbReference type="PaxDb" id="9823-ENSSSCP00000002657"/>
<dbReference type="PeptideAtlas" id="P04404"/>
<dbReference type="GeneID" id="397540"/>
<dbReference type="KEGG" id="ssc:397540"/>
<dbReference type="CTD" id="1113"/>
<dbReference type="eggNOG" id="ENOG502RZBD">
    <property type="taxonomic scope" value="Eukaryota"/>
</dbReference>
<dbReference type="InParanoid" id="P04404"/>
<dbReference type="OrthoDB" id="9948620at2759"/>
<dbReference type="Proteomes" id="UP000008227">
    <property type="component" value="Unplaced"/>
</dbReference>
<dbReference type="Proteomes" id="UP000314985">
    <property type="component" value="Unplaced"/>
</dbReference>
<dbReference type="Proteomes" id="UP000694570">
    <property type="component" value="Unplaced"/>
</dbReference>
<dbReference type="Proteomes" id="UP000694571">
    <property type="component" value="Unplaced"/>
</dbReference>
<dbReference type="Proteomes" id="UP000694720">
    <property type="component" value="Unplaced"/>
</dbReference>
<dbReference type="Proteomes" id="UP000694722">
    <property type="component" value="Unplaced"/>
</dbReference>
<dbReference type="Proteomes" id="UP000694723">
    <property type="component" value="Unplaced"/>
</dbReference>
<dbReference type="Proteomes" id="UP000694724">
    <property type="component" value="Unplaced"/>
</dbReference>
<dbReference type="Proteomes" id="UP000694725">
    <property type="component" value="Unplaced"/>
</dbReference>
<dbReference type="Proteomes" id="UP000694726">
    <property type="component" value="Unplaced"/>
</dbReference>
<dbReference type="Proteomes" id="UP000694727">
    <property type="component" value="Unplaced"/>
</dbReference>
<dbReference type="Proteomes" id="UP000694728">
    <property type="component" value="Unplaced"/>
</dbReference>
<dbReference type="GO" id="GO:0042583">
    <property type="term" value="C:chromaffin granule"/>
    <property type="evidence" value="ECO:0000318"/>
    <property type="project" value="GO_Central"/>
</dbReference>
<dbReference type="GO" id="GO:0005615">
    <property type="term" value="C:extracellular space"/>
    <property type="evidence" value="ECO:0000318"/>
    <property type="project" value="GO_Central"/>
</dbReference>
<dbReference type="GO" id="GO:0098992">
    <property type="term" value="C:neuronal dense core vesicle"/>
    <property type="evidence" value="ECO:0000250"/>
    <property type="project" value="UniProtKB"/>
</dbReference>
<dbReference type="GO" id="GO:0030141">
    <property type="term" value="C:secretory granule"/>
    <property type="evidence" value="ECO:0000250"/>
    <property type="project" value="UniProtKB"/>
</dbReference>
<dbReference type="GO" id="GO:0030133">
    <property type="term" value="C:transport vesicle"/>
    <property type="evidence" value="ECO:0007669"/>
    <property type="project" value="UniProtKB-SubCell"/>
</dbReference>
<dbReference type="GO" id="GO:0042742">
    <property type="term" value="P:defense response to bacterium"/>
    <property type="evidence" value="ECO:0000318"/>
    <property type="project" value="GO_Central"/>
</dbReference>
<dbReference type="GO" id="GO:0050829">
    <property type="term" value="P:defense response to Gram-negative bacterium"/>
    <property type="evidence" value="ECO:0000250"/>
    <property type="project" value="UniProtKB"/>
</dbReference>
<dbReference type="GO" id="GO:0050830">
    <property type="term" value="P:defense response to Gram-positive bacterium"/>
    <property type="evidence" value="ECO:0000250"/>
    <property type="project" value="UniProtKB"/>
</dbReference>
<dbReference type="GO" id="GO:0045576">
    <property type="term" value="P:mast cell activation"/>
    <property type="evidence" value="ECO:0000250"/>
    <property type="project" value="UniProtKB"/>
</dbReference>
<dbReference type="GO" id="GO:0002551">
    <property type="term" value="P:mast cell chemotaxis"/>
    <property type="evidence" value="ECO:0000250"/>
    <property type="project" value="UniProtKB"/>
</dbReference>
<dbReference type="GO" id="GO:0043303">
    <property type="term" value="P:mast cell degranulation"/>
    <property type="evidence" value="ECO:0000250"/>
    <property type="project" value="UniProtKB"/>
</dbReference>
<dbReference type="GO" id="GO:0033604">
    <property type="term" value="P:negative regulation of catecholamine secretion"/>
    <property type="evidence" value="ECO:0000250"/>
    <property type="project" value="UniProtKB"/>
</dbReference>
<dbReference type="GO" id="GO:0046676">
    <property type="term" value="P:negative regulation of insulin secretion"/>
    <property type="evidence" value="ECO:0000318"/>
    <property type="project" value="GO_Central"/>
</dbReference>
<dbReference type="GO" id="GO:2000707">
    <property type="term" value="P:positive regulation of dense core granule biogenesis"/>
    <property type="evidence" value="ECO:0000250"/>
    <property type="project" value="UniProtKB"/>
</dbReference>
<dbReference type="InterPro" id="IPR001819">
    <property type="entry name" value="Chromogranin_AB"/>
</dbReference>
<dbReference type="InterPro" id="IPR018054">
    <property type="entry name" value="Chromogranin_CS"/>
</dbReference>
<dbReference type="InterPro" id="IPR001990">
    <property type="entry name" value="Granin"/>
</dbReference>
<dbReference type="PANTHER" id="PTHR10583">
    <property type="entry name" value="CHROMOGRANIN"/>
    <property type="match status" value="1"/>
</dbReference>
<dbReference type="PANTHER" id="PTHR10583:SF1">
    <property type="entry name" value="CHROMOGRANIN-A"/>
    <property type="match status" value="1"/>
</dbReference>
<dbReference type="Pfam" id="PF01271">
    <property type="entry name" value="Granin"/>
    <property type="match status" value="2"/>
</dbReference>
<dbReference type="PRINTS" id="PR00659">
    <property type="entry name" value="CHROMOGRANIN"/>
</dbReference>
<dbReference type="PROSITE" id="PS00422">
    <property type="entry name" value="GRANINS_1"/>
    <property type="match status" value="1"/>
</dbReference>
<dbReference type="PROSITE" id="PS00423">
    <property type="entry name" value="GRANINS_2"/>
    <property type="match status" value="1"/>
</dbReference>
<evidence type="ECO:0000250" key="1"/>
<evidence type="ECO:0000250" key="2">
    <source>
        <dbReference type="UniProtKB" id="P05059"/>
    </source>
</evidence>
<evidence type="ECO:0000250" key="3">
    <source>
        <dbReference type="UniProtKB" id="P10354"/>
    </source>
</evidence>
<evidence type="ECO:0000250" key="4">
    <source>
        <dbReference type="UniProtKB" id="P10645"/>
    </source>
</evidence>
<evidence type="ECO:0000250" key="5">
    <source>
        <dbReference type="UniProtKB" id="P26339"/>
    </source>
</evidence>
<evidence type="ECO:0000256" key="6">
    <source>
        <dbReference type="SAM" id="MobiDB-lite"/>
    </source>
</evidence>
<evidence type="ECO:0000269" key="7">
    <source>
    </source>
</evidence>
<evidence type="ECO:0000269" key="8">
    <source>
    </source>
</evidence>
<evidence type="ECO:0000305" key="9"/>
<gene>
    <name type="primary">CHGA</name>
</gene>
<protein>
    <recommendedName>
        <fullName>Chromogranin-A</fullName>
        <shortName>CgA</shortName>
    </recommendedName>
    <component>
        <recommendedName>
            <fullName>Pancreastatin</fullName>
        </recommendedName>
    </component>
    <component>
        <recommendedName>
            <fullName>Parastatin</fullName>
        </recommendedName>
    </component>
    <component>
        <recommendedName>
            <fullName>WE-14</fullName>
        </recommendedName>
    </component>
    <component>
        <recommendedName>
            <fullName>Catestatin</fullName>
        </recommendedName>
    </component>
    <component>
        <recommendedName>
            <fullName>GE-25</fullName>
        </recommendedName>
    </component>
    <component>
        <recommendedName>
            <fullName>Serpinin-RRG</fullName>
        </recommendedName>
    </component>
    <component>
        <recommendedName>
            <fullName>Serpinin</fullName>
        </recommendedName>
    </component>
    <component>
        <recommendedName>
            <fullName>p-Glu serpinin precursor</fullName>
        </recommendedName>
    </component>
</protein>
<keyword id="KW-0027">Amidation</keyword>
<keyword id="KW-0106">Calcium</keyword>
<keyword id="KW-0165">Cleavage on pair of basic residues</keyword>
<keyword id="KW-0968">Cytoplasmic vesicle</keyword>
<keyword id="KW-0903">Direct protein sequencing</keyword>
<keyword id="KW-1015">Disulfide bond</keyword>
<keyword id="KW-0325">Glycoprotein</keyword>
<keyword id="KW-0558">Oxidation</keyword>
<keyword id="KW-0597">Phosphoprotein</keyword>
<keyword id="KW-0654">Proteoglycan</keyword>
<keyword id="KW-1185">Reference proteome</keyword>
<keyword id="KW-0964">Secreted</keyword>
<keyword id="KW-0732">Signal</keyword>
<keyword id="KW-0765">Sulfation</keyword>
<proteinExistence type="evidence at protein level"/>
<reference key="1">
    <citation type="journal article" date="1988" name="Endocrinology">
        <title>The sequence of porcine chromogranin A messenger RNA demonstrates chromogranin A can serve as the precursor for the biologically active hormone, pancreastatin.</title>
        <authorList>
            <person name="Iacangelo A.L."/>
            <person name="Fischer-Colbrie R."/>
            <person name="Koller K.J."/>
            <person name="Brownstein M.J."/>
            <person name="Eiden L.E."/>
        </authorList>
    </citation>
    <scope>NUCLEOTIDE SEQUENCE [MRNA]</scope>
</reference>
<reference key="2">
    <citation type="journal article" date="1986" name="Nature">
        <title>Pancreastatin, a novel pancreatic peptide that inhibits insulin secretion.</title>
        <authorList>
            <person name="Tatemoto K."/>
            <person name="Efendie S."/>
            <person name="Mutt V."/>
            <person name="Makk G."/>
            <person name="Feistner G.J."/>
            <person name="Barchas J.D."/>
        </authorList>
    </citation>
    <scope>PROTEIN SEQUENCE OF 256-304</scope>
    <scope>AMIDATION AT GLY-304</scope>
</reference>
<reference key="3">
    <citation type="journal article" date="1993" name="Endocrinology">
        <title>Parastatin (porcine chromogranin A347-419), a novel chromogranin A-derived peptide, inhibits parathyroid cell secretion.</title>
        <authorList>
            <person name="Fasciotto B.H."/>
            <person name="Trauss C.A."/>
            <person name="Greeley G.H."/>
            <person name="Cohn D.V."/>
        </authorList>
    </citation>
    <scope>PROTEIN SEQUENCE OF 363-377</scope>
</reference>
<reference key="4">
    <citation type="journal article" date="1990" name="J. Biol. Chem.">
        <title>Secretion of sulfated and nonsulfated forms of parathyroid chromogranin A (secretory protein-I).</title>
        <authorList>
            <person name="Gorr S.U."/>
            <person name="Cohn D.V."/>
        </authorList>
    </citation>
    <scope>SULFATION</scope>
</reference>